<name>Y537_SYNY3</name>
<sequence>MTSIDTLWLLLCAGLVFFMQAGFMCLESGLTRSKNSINVAIKNFADFGISVALFWSFGFSIMFGLSQGGWWGTGYSFVDVGGEPTLAVFFLFQAMFCGTATTIISGAAAERLKFSAYLLVAGLASGLIYPLFGDWAWNGLATVAGIETTGGWLENLGFRDFAGSTVVHSVGAWIGLATILVVGPRQGRFPKTGKTLKIQGSNMPFSVLGTLILWFGWLGFNGGSTFGLTPEVPGIMVNTVLAGVGGMLMAGLISLLQDKMIQVEPLMNGSLAGLVAITASANVVMTPIAMVIGATGSAIAYLVGKKMLHWGVDDAVDAVAVHGGAGVWGTLCVGLFGQLPLVDTGLNRWQQCGVQLLGIGVCTLWAFGLAWVFLTLLNRVFALRISPEDEEIGLNVSEHQATTETYELFQVMDRQAKTHDLSLRVPVNPFTEVGHIAGRYNQVMDAFEARHHRSVEDLAQIYYVTAAIAAAIENNSFKADQLGLEEVTNRADELGALARTIQQMAEMLQQRDQELIAVKQQLVLQQQKQHHGNGESVDLSP</sequence>
<proteinExistence type="inferred from homology"/>
<reference key="1">
    <citation type="journal article" date="1995" name="DNA Res.">
        <title>Sequence analysis of the genome of the unicellular cyanobacterium Synechocystis sp. strain PCC6803. I. Sequence features in the 1 Mb region from map positions 64% to 92% of the genome.</title>
        <authorList>
            <person name="Kaneko T."/>
            <person name="Tanaka A."/>
            <person name="Sato S."/>
            <person name="Kotani H."/>
            <person name="Sazuka T."/>
            <person name="Miyajima N."/>
            <person name="Sugiura M."/>
            <person name="Tabata S."/>
        </authorList>
    </citation>
    <scope>NUCLEOTIDE SEQUENCE [LARGE SCALE GENOMIC DNA]</scope>
    <source>
        <strain>ATCC 27184 / PCC 6803 / N-1</strain>
    </source>
</reference>
<reference key="2">
    <citation type="journal article" date="1996" name="DNA Res.">
        <title>Sequence analysis of the genome of the unicellular cyanobacterium Synechocystis sp. strain PCC6803. II. Sequence determination of the entire genome and assignment of potential protein-coding regions.</title>
        <authorList>
            <person name="Kaneko T."/>
            <person name="Sato S."/>
            <person name="Kotani H."/>
            <person name="Tanaka A."/>
            <person name="Asamizu E."/>
            <person name="Nakamura Y."/>
            <person name="Miyajima N."/>
            <person name="Hirosawa M."/>
            <person name="Sugiura M."/>
            <person name="Sasamoto S."/>
            <person name="Kimura T."/>
            <person name="Hosouchi T."/>
            <person name="Matsuno A."/>
            <person name="Muraki A."/>
            <person name="Nakazaki N."/>
            <person name="Naruo K."/>
            <person name="Okumura S."/>
            <person name="Shimpo S."/>
            <person name="Takeuchi C."/>
            <person name="Wada T."/>
            <person name="Watanabe A."/>
            <person name="Yamada M."/>
            <person name="Yasuda M."/>
            <person name="Tabata S."/>
        </authorList>
    </citation>
    <scope>NUCLEOTIDE SEQUENCE [LARGE SCALE GENOMIC DNA]</scope>
    <source>
        <strain>ATCC 27184 / PCC 6803 / Kazusa</strain>
    </source>
</reference>
<keyword id="KW-0924">Ammonia transport</keyword>
<keyword id="KW-1003">Cell membrane</keyword>
<keyword id="KW-0472">Membrane</keyword>
<keyword id="KW-1185">Reference proteome</keyword>
<keyword id="KW-0812">Transmembrane</keyword>
<keyword id="KW-1133">Transmembrane helix</keyword>
<keyword id="KW-0813">Transport</keyword>
<accession>P54148</accession>
<evidence type="ECO:0000255" key="1"/>
<evidence type="ECO:0000305" key="2"/>
<gene>
    <name type="ordered locus">sll0537</name>
</gene>
<protein>
    <recommendedName>
        <fullName>Putative ammonium transporter sll0537</fullName>
    </recommendedName>
</protein>
<comment type="subcellular location">
    <subcellularLocation>
        <location evidence="2">Cell membrane</location>
        <topology evidence="2">Multi-pass membrane protein</topology>
    </subcellularLocation>
</comment>
<comment type="similarity">
    <text evidence="2">Belongs to the ammonia transporter channel (TC 1.A.11.2) family.</text>
</comment>
<organism>
    <name type="scientific">Synechocystis sp. (strain ATCC 27184 / PCC 6803 / Kazusa)</name>
    <dbReference type="NCBI Taxonomy" id="1111708"/>
    <lineage>
        <taxon>Bacteria</taxon>
        <taxon>Bacillati</taxon>
        <taxon>Cyanobacteriota</taxon>
        <taxon>Cyanophyceae</taxon>
        <taxon>Synechococcales</taxon>
        <taxon>Merismopediaceae</taxon>
        <taxon>Synechocystis</taxon>
    </lineage>
</organism>
<feature type="chain" id="PRO_0000139762" description="Putative ammonium transporter sll0537">
    <location>
        <begin position="1"/>
        <end position="541"/>
    </location>
</feature>
<feature type="transmembrane region" description="Helical" evidence="1">
    <location>
        <begin position="6"/>
        <end position="26"/>
    </location>
</feature>
<feature type="transmembrane region" description="Helical" evidence="1">
    <location>
        <begin position="44"/>
        <end position="64"/>
    </location>
</feature>
<feature type="transmembrane region" description="Helical" evidence="1">
    <location>
        <begin position="86"/>
        <end position="106"/>
    </location>
</feature>
<feature type="transmembrane region" description="Helical" evidence="1">
    <location>
        <begin position="117"/>
        <end position="137"/>
    </location>
</feature>
<feature type="transmembrane region" description="Helical" evidence="1">
    <location>
        <begin position="161"/>
        <end position="181"/>
    </location>
</feature>
<feature type="transmembrane region" description="Helical" evidence="1">
    <location>
        <begin position="203"/>
        <end position="223"/>
    </location>
</feature>
<feature type="transmembrane region" description="Helical" evidence="1">
    <location>
        <begin position="235"/>
        <end position="255"/>
    </location>
</feature>
<feature type="transmembrane region" description="Helical" evidence="1">
    <location>
        <begin position="260"/>
        <end position="280"/>
    </location>
</feature>
<feature type="transmembrane region" description="Helical" evidence="1">
    <location>
        <begin position="283"/>
        <end position="303"/>
    </location>
</feature>
<feature type="transmembrane region" description="Helical" evidence="1">
    <location>
        <begin position="316"/>
        <end position="336"/>
    </location>
</feature>
<feature type="transmembrane region" description="Helical" evidence="1">
    <location>
        <begin position="356"/>
        <end position="376"/>
    </location>
</feature>
<dbReference type="EMBL" id="BA000022">
    <property type="protein sequence ID" value="BAA10864.1"/>
    <property type="molecule type" value="Genomic_DNA"/>
</dbReference>
<dbReference type="PIR" id="S76017">
    <property type="entry name" value="S76017"/>
</dbReference>
<dbReference type="SMR" id="P54148"/>
<dbReference type="FunCoup" id="P54148">
    <property type="interactions" value="411"/>
</dbReference>
<dbReference type="STRING" id="1148.gene:10500370"/>
<dbReference type="PaxDb" id="1148-1001374"/>
<dbReference type="EnsemblBacteria" id="BAA10864">
    <property type="protein sequence ID" value="BAA10864"/>
    <property type="gene ID" value="BAA10864"/>
</dbReference>
<dbReference type="KEGG" id="syn:sll0537"/>
<dbReference type="eggNOG" id="COG0004">
    <property type="taxonomic scope" value="Bacteria"/>
</dbReference>
<dbReference type="InParanoid" id="P54148"/>
<dbReference type="PhylomeDB" id="P54148"/>
<dbReference type="Proteomes" id="UP000001425">
    <property type="component" value="Chromosome"/>
</dbReference>
<dbReference type="GO" id="GO:0005886">
    <property type="term" value="C:plasma membrane"/>
    <property type="evidence" value="ECO:0007669"/>
    <property type="project" value="UniProtKB-SubCell"/>
</dbReference>
<dbReference type="GO" id="GO:0008519">
    <property type="term" value="F:ammonium channel activity"/>
    <property type="evidence" value="ECO:0007669"/>
    <property type="project" value="InterPro"/>
</dbReference>
<dbReference type="GO" id="GO:0097272">
    <property type="term" value="P:ammonium homeostasis"/>
    <property type="evidence" value="ECO:0000318"/>
    <property type="project" value="GO_Central"/>
</dbReference>
<dbReference type="GO" id="GO:0072488">
    <property type="term" value="P:ammonium transmembrane transport"/>
    <property type="evidence" value="ECO:0000318"/>
    <property type="project" value="GO_Central"/>
</dbReference>
<dbReference type="GO" id="GO:0007165">
    <property type="term" value="P:signal transduction"/>
    <property type="evidence" value="ECO:0007669"/>
    <property type="project" value="InterPro"/>
</dbReference>
<dbReference type="CDD" id="cd06225">
    <property type="entry name" value="HAMP"/>
    <property type="match status" value="1"/>
</dbReference>
<dbReference type="Gene3D" id="1.10.3430.10">
    <property type="entry name" value="Ammonium transporter AmtB like domains"/>
    <property type="match status" value="1"/>
</dbReference>
<dbReference type="InterPro" id="IPR029020">
    <property type="entry name" value="Ammonium/urea_transptr"/>
</dbReference>
<dbReference type="InterPro" id="IPR001905">
    <property type="entry name" value="Ammonium_transpt"/>
</dbReference>
<dbReference type="InterPro" id="IPR018047">
    <property type="entry name" value="Ammonium_transpt_CS"/>
</dbReference>
<dbReference type="InterPro" id="IPR003660">
    <property type="entry name" value="HAMP_dom"/>
</dbReference>
<dbReference type="InterPro" id="IPR024041">
    <property type="entry name" value="NH4_transpt_AmtB-like_dom"/>
</dbReference>
<dbReference type="NCBIfam" id="TIGR00836">
    <property type="entry name" value="amt"/>
    <property type="match status" value="1"/>
</dbReference>
<dbReference type="PANTHER" id="PTHR11730">
    <property type="entry name" value="AMMONIUM TRANSPORTER"/>
    <property type="match status" value="1"/>
</dbReference>
<dbReference type="PANTHER" id="PTHR11730:SF6">
    <property type="entry name" value="AMMONIUM TRANSPORTER"/>
    <property type="match status" value="1"/>
</dbReference>
<dbReference type="Pfam" id="PF00909">
    <property type="entry name" value="Ammonium_transp"/>
    <property type="match status" value="1"/>
</dbReference>
<dbReference type="Pfam" id="PF00672">
    <property type="entry name" value="HAMP"/>
    <property type="match status" value="1"/>
</dbReference>
<dbReference type="SUPFAM" id="SSF111352">
    <property type="entry name" value="Ammonium transporter"/>
    <property type="match status" value="1"/>
</dbReference>
<dbReference type="PROSITE" id="PS01219">
    <property type="entry name" value="AMMONIUM_TRANSP"/>
    <property type="match status" value="1"/>
</dbReference>